<organism>
    <name type="scientific">Arthrobacter sp. (strain FB24)</name>
    <dbReference type="NCBI Taxonomy" id="290399"/>
    <lineage>
        <taxon>Bacteria</taxon>
        <taxon>Bacillati</taxon>
        <taxon>Actinomycetota</taxon>
        <taxon>Actinomycetes</taxon>
        <taxon>Micrococcales</taxon>
        <taxon>Micrococcaceae</taxon>
        <taxon>Arthrobacter</taxon>
    </lineage>
</organism>
<keyword id="KW-0240">DNA-directed RNA polymerase</keyword>
<keyword id="KW-0548">Nucleotidyltransferase</keyword>
<keyword id="KW-1185">Reference proteome</keyword>
<keyword id="KW-0804">Transcription</keyword>
<keyword id="KW-0808">Transferase</keyword>
<dbReference type="EC" id="2.7.7.6" evidence="1"/>
<dbReference type="EMBL" id="CP000454">
    <property type="protein sequence ID" value="ABK04319.1"/>
    <property type="molecule type" value="Genomic_DNA"/>
</dbReference>
<dbReference type="RefSeq" id="WP_011692778.1">
    <property type="nucleotide sequence ID" value="NC_008541.1"/>
</dbReference>
<dbReference type="SMR" id="A0JZ49"/>
<dbReference type="STRING" id="290399.Arth_2940"/>
<dbReference type="KEGG" id="art:Arth_2940"/>
<dbReference type="eggNOG" id="COG0202">
    <property type="taxonomic scope" value="Bacteria"/>
</dbReference>
<dbReference type="HOGENOM" id="CLU_053084_0_1_11"/>
<dbReference type="OrthoDB" id="9805706at2"/>
<dbReference type="Proteomes" id="UP000000754">
    <property type="component" value="Chromosome"/>
</dbReference>
<dbReference type="GO" id="GO:0005737">
    <property type="term" value="C:cytoplasm"/>
    <property type="evidence" value="ECO:0007669"/>
    <property type="project" value="UniProtKB-ARBA"/>
</dbReference>
<dbReference type="GO" id="GO:0000428">
    <property type="term" value="C:DNA-directed RNA polymerase complex"/>
    <property type="evidence" value="ECO:0007669"/>
    <property type="project" value="UniProtKB-KW"/>
</dbReference>
<dbReference type="GO" id="GO:0003677">
    <property type="term" value="F:DNA binding"/>
    <property type="evidence" value="ECO:0007669"/>
    <property type="project" value="UniProtKB-UniRule"/>
</dbReference>
<dbReference type="GO" id="GO:0003899">
    <property type="term" value="F:DNA-directed RNA polymerase activity"/>
    <property type="evidence" value="ECO:0007669"/>
    <property type="project" value="UniProtKB-UniRule"/>
</dbReference>
<dbReference type="GO" id="GO:0046983">
    <property type="term" value="F:protein dimerization activity"/>
    <property type="evidence" value="ECO:0007669"/>
    <property type="project" value="InterPro"/>
</dbReference>
<dbReference type="GO" id="GO:0006351">
    <property type="term" value="P:DNA-templated transcription"/>
    <property type="evidence" value="ECO:0007669"/>
    <property type="project" value="UniProtKB-UniRule"/>
</dbReference>
<dbReference type="CDD" id="cd06928">
    <property type="entry name" value="RNAP_alpha_NTD"/>
    <property type="match status" value="1"/>
</dbReference>
<dbReference type="FunFam" id="1.10.150.20:FF:000001">
    <property type="entry name" value="DNA-directed RNA polymerase subunit alpha"/>
    <property type="match status" value="1"/>
</dbReference>
<dbReference type="FunFam" id="2.170.120.12:FF:000001">
    <property type="entry name" value="DNA-directed RNA polymerase subunit alpha"/>
    <property type="match status" value="1"/>
</dbReference>
<dbReference type="Gene3D" id="1.10.150.20">
    <property type="entry name" value="5' to 3' exonuclease, C-terminal subdomain"/>
    <property type="match status" value="1"/>
</dbReference>
<dbReference type="Gene3D" id="2.170.120.12">
    <property type="entry name" value="DNA-directed RNA polymerase, insert domain"/>
    <property type="match status" value="1"/>
</dbReference>
<dbReference type="Gene3D" id="3.30.1360.10">
    <property type="entry name" value="RNA polymerase, RBP11-like subunit"/>
    <property type="match status" value="1"/>
</dbReference>
<dbReference type="HAMAP" id="MF_00059">
    <property type="entry name" value="RNApol_bact_RpoA"/>
    <property type="match status" value="1"/>
</dbReference>
<dbReference type="InterPro" id="IPR011262">
    <property type="entry name" value="DNA-dir_RNA_pol_insert"/>
</dbReference>
<dbReference type="InterPro" id="IPR011263">
    <property type="entry name" value="DNA-dir_RNA_pol_RpoA/D/Rpb3"/>
</dbReference>
<dbReference type="InterPro" id="IPR011773">
    <property type="entry name" value="DNA-dir_RpoA"/>
</dbReference>
<dbReference type="InterPro" id="IPR036603">
    <property type="entry name" value="RBP11-like"/>
</dbReference>
<dbReference type="InterPro" id="IPR011260">
    <property type="entry name" value="RNAP_asu_C"/>
</dbReference>
<dbReference type="InterPro" id="IPR036643">
    <property type="entry name" value="RNApol_insert_sf"/>
</dbReference>
<dbReference type="NCBIfam" id="NF003513">
    <property type="entry name" value="PRK05182.1-2"/>
    <property type="match status" value="1"/>
</dbReference>
<dbReference type="NCBIfam" id="NF003514">
    <property type="entry name" value="PRK05182.1-4"/>
    <property type="match status" value="1"/>
</dbReference>
<dbReference type="NCBIfam" id="NF003519">
    <property type="entry name" value="PRK05182.2-5"/>
    <property type="match status" value="1"/>
</dbReference>
<dbReference type="NCBIfam" id="TIGR02027">
    <property type="entry name" value="rpoA"/>
    <property type="match status" value="1"/>
</dbReference>
<dbReference type="Pfam" id="PF01000">
    <property type="entry name" value="RNA_pol_A_bac"/>
    <property type="match status" value="1"/>
</dbReference>
<dbReference type="Pfam" id="PF03118">
    <property type="entry name" value="RNA_pol_A_CTD"/>
    <property type="match status" value="1"/>
</dbReference>
<dbReference type="Pfam" id="PF01193">
    <property type="entry name" value="RNA_pol_L"/>
    <property type="match status" value="1"/>
</dbReference>
<dbReference type="SMART" id="SM00662">
    <property type="entry name" value="RPOLD"/>
    <property type="match status" value="1"/>
</dbReference>
<dbReference type="SUPFAM" id="SSF47789">
    <property type="entry name" value="C-terminal domain of RNA polymerase alpha subunit"/>
    <property type="match status" value="1"/>
</dbReference>
<dbReference type="SUPFAM" id="SSF56553">
    <property type="entry name" value="Insert subdomain of RNA polymerase alpha subunit"/>
    <property type="match status" value="1"/>
</dbReference>
<dbReference type="SUPFAM" id="SSF55257">
    <property type="entry name" value="RBP11-like subunits of RNA polymerase"/>
    <property type="match status" value="1"/>
</dbReference>
<protein>
    <recommendedName>
        <fullName evidence="1">DNA-directed RNA polymerase subunit alpha</fullName>
        <shortName evidence="1">RNAP subunit alpha</shortName>
        <ecNumber evidence="1">2.7.7.6</ecNumber>
    </recommendedName>
    <alternativeName>
        <fullName evidence="1">RNA polymerase subunit alpha</fullName>
    </alternativeName>
    <alternativeName>
        <fullName evidence="1">Transcriptase subunit alpha</fullName>
    </alternativeName>
</protein>
<proteinExistence type="inferred from homology"/>
<feature type="chain" id="PRO_0000296780" description="DNA-directed RNA polymerase subunit alpha">
    <location>
        <begin position="1"/>
        <end position="336"/>
    </location>
</feature>
<feature type="region of interest" description="Alpha N-terminal domain (alpha-NTD)" evidence="1">
    <location>
        <begin position="1"/>
        <end position="226"/>
    </location>
</feature>
<feature type="region of interest" description="Alpha C-terminal domain (alpha-CTD)" evidence="1">
    <location>
        <begin position="241"/>
        <end position="336"/>
    </location>
</feature>
<sequence>MLIAQRPTLSEEVVSENRSRFIIEPLEPGFGYTLGNSLRRTLLSSIPGAAVTSIRIDGVLHEFTTVPGVKEDVTEIILNIKNLSVSSEHDEPVVAYLRKQGPGVVTAADIAPPAGVEFHNPDLHIATLNSKGKFELELTIERGRGYVSAAQNKSGDSEIGRIPVDSIYSPVLKVTFRVEATRVEQRTDFDKLIVDVETKQAIAPRDAVASAGTTLVELFGLARELNTAAEGIEIGPSPTDAALAADMALPIEDLDLTVRSYNCLKREGIHTVGELVARSEADLMDIRNFGAKSIDEVKAKLVELGLSLKDSPPGFDLAARAAAIEEDDAAFSDDEL</sequence>
<evidence type="ECO:0000255" key="1">
    <source>
        <dbReference type="HAMAP-Rule" id="MF_00059"/>
    </source>
</evidence>
<accession>A0JZ49</accession>
<comment type="function">
    <text evidence="1">DNA-dependent RNA polymerase catalyzes the transcription of DNA into RNA using the four ribonucleoside triphosphates as substrates.</text>
</comment>
<comment type="catalytic activity">
    <reaction evidence="1">
        <text>RNA(n) + a ribonucleoside 5'-triphosphate = RNA(n+1) + diphosphate</text>
        <dbReference type="Rhea" id="RHEA:21248"/>
        <dbReference type="Rhea" id="RHEA-COMP:14527"/>
        <dbReference type="Rhea" id="RHEA-COMP:17342"/>
        <dbReference type="ChEBI" id="CHEBI:33019"/>
        <dbReference type="ChEBI" id="CHEBI:61557"/>
        <dbReference type="ChEBI" id="CHEBI:140395"/>
        <dbReference type="EC" id="2.7.7.6"/>
    </reaction>
</comment>
<comment type="subunit">
    <text evidence="1">Homodimer. The RNAP catalytic core consists of 2 alpha, 1 beta, 1 beta' and 1 omega subunit. When a sigma factor is associated with the core the holoenzyme is formed, which can initiate transcription.</text>
</comment>
<comment type="domain">
    <text evidence="1">The N-terminal domain is essential for RNAP assembly and basal transcription, whereas the C-terminal domain is involved in interaction with transcriptional regulators and with upstream promoter elements.</text>
</comment>
<comment type="similarity">
    <text evidence="1">Belongs to the RNA polymerase alpha chain family.</text>
</comment>
<reference key="1">
    <citation type="journal article" date="2013" name="Stand. Genomic Sci.">
        <title>Complete genome sequence of Arthrobacter sp. strain FB24.</title>
        <authorList>
            <person name="Nakatsu C.H."/>
            <person name="Barabote R."/>
            <person name="Thompson S."/>
            <person name="Bruce D."/>
            <person name="Detter C."/>
            <person name="Brettin T."/>
            <person name="Han C."/>
            <person name="Beasley F."/>
            <person name="Chen W."/>
            <person name="Konopka A."/>
            <person name="Xie G."/>
        </authorList>
    </citation>
    <scope>NUCLEOTIDE SEQUENCE [LARGE SCALE GENOMIC DNA]</scope>
    <source>
        <strain>FB24</strain>
    </source>
</reference>
<gene>
    <name evidence="1" type="primary">rpoA</name>
    <name type="ordered locus">Arth_2940</name>
</gene>
<name>RPOA_ARTS2</name>